<feature type="chain" id="PRO_0000154045" description="Exodeoxyribonuclease 1">
    <location>
        <begin position="1"/>
        <end position="702"/>
    </location>
</feature>
<feature type="region of interest" description="N-domain">
    <location>
        <begin position="1"/>
        <end position="96"/>
    </location>
</feature>
<feature type="region of interest" description="I-domain">
    <location>
        <begin position="114"/>
        <end position="247"/>
    </location>
</feature>
<feature type="region of interest" description="Disordered" evidence="2">
    <location>
        <begin position="465"/>
        <end position="571"/>
    </location>
</feature>
<feature type="region of interest" description="Disordered" evidence="2">
    <location>
        <begin position="660"/>
        <end position="685"/>
    </location>
</feature>
<feature type="compositionally biased region" description="Polar residues" evidence="2">
    <location>
        <begin position="474"/>
        <end position="498"/>
    </location>
</feature>
<feature type="compositionally biased region" description="Acidic residues" evidence="2">
    <location>
        <begin position="500"/>
        <end position="518"/>
    </location>
</feature>
<feature type="compositionally biased region" description="Acidic residues" evidence="2">
    <location>
        <begin position="535"/>
        <end position="550"/>
    </location>
</feature>
<feature type="compositionally biased region" description="Low complexity" evidence="2">
    <location>
        <begin position="558"/>
        <end position="571"/>
    </location>
</feature>
<feature type="compositionally biased region" description="Basic and acidic residues" evidence="2">
    <location>
        <begin position="667"/>
        <end position="678"/>
    </location>
</feature>
<feature type="binding site" evidence="1">
    <location>
        <position position="30"/>
    </location>
    <ligand>
        <name>Mg(2+)</name>
        <dbReference type="ChEBI" id="CHEBI:18420"/>
        <label>1</label>
    </ligand>
</feature>
<feature type="binding site" evidence="1">
    <location>
        <position position="78"/>
    </location>
    <ligand>
        <name>Mg(2+)</name>
        <dbReference type="ChEBI" id="CHEBI:18420"/>
        <label>1</label>
    </ligand>
</feature>
<feature type="binding site" evidence="1">
    <location>
        <position position="150"/>
    </location>
    <ligand>
        <name>Mg(2+)</name>
        <dbReference type="ChEBI" id="CHEBI:18420"/>
        <label>1</label>
    </ligand>
</feature>
<feature type="binding site" evidence="1">
    <location>
        <position position="152"/>
    </location>
    <ligand>
        <name>Mg(2+)</name>
        <dbReference type="ChEBI" id="CHEBI:18420"/>
        <label>1</label>
    </ligand>
</feature>
<feature type="binding site" evidence="1">
    <location>
        <position position="171"/>
    </location>
    <ligand>
        <name>Mg(2+)</name>
        <dbReference type="ChEBI" id="CHEBI:18420"/>
        <label>2</label>
    </ligand>
</feature>
<feature type="binding site" evidence="1">
    <location>
        <position position="173"/>
    </location>
    <ligand>
        <name>Mg(2+)</name>
        <dbReference type="ChEBI" id="CHEBI:18420"/>
        <label>2</label>
    </ligand>
</feature>
<feature type="binding site" evidence="1">
    <location>
        <position position="227"/>
    </location>
    <ligand>
        <name>Mg(2+)</name>
        <dbReference type="ChEBI" id="CHEBI:18420"/>
        <label>2</label>
    </ligand>
</feature>
<feature type="modified residue" description="Phosphoserine" evidence="9">
    <location>
        <position position="372"/>
    </location>
</feature>
<organism>
    <name type="scientific">Saccharomyces cerevisiae (strain ATCC 204508 / S288c)</name>
    <name type="common">Baker's yeast</name>
    <dbReference type="NCBI Taxonomy" id="559292"/>
    <lineage>
        <taxon>Eukaryota</taxon>
        <taxon>Fungi</taxon>
        <taxon>Dikarya</taxon>
        <taxon>Ascomycota</taxon>
        <taxon>Saccharomycotina</taxon>
        <taxon>Saccharomycetes</taxon>
        <taxon>Saccharomycetales</taxon>
        <taxon>Saccharomycetaceae</taxon>
        <taxon>Saccharomyces</taxon>
    </lineage>
</organism>
<evidence type="ECO:0000250" key="1"/>
<evidence type="ECO:0000256" key="2">
    <source>
        <dbReference type="SAM" id="MobiDB-lite"/>
    </source>
</evidence>
<evidence type="ECO:0000269" key="3">
    <source>
    </source>
</evidence>
<evidence type="ECO:0000269" key="4">
    <source>
    </source>
</evidence>
<evidence type="ECO:0000269" key="5">
    <source>
    </source>
</evidence>
<evidence type="ECO:0000269" key="6">
    <source>
    </source>
</evidence>
<evidence type="ECO:0000269" key="7">
    <source>
    </source>
</evidence>
<evidence type="ECO:0000305" key="8"/>
<evidence type="ECO:0007744" key="9">
    <source>
    </source>
</evidence>
<proteinExistence type="evidence at protein level"/>
<reference key="1">
    <citation type="journal article" date="1997" name="Proc. Natl. Acad. Sci. U.S.A.">
        <title>Identification and characterization of Saccharomyces cerevisiae EXO1, a gene encoding an exonuclease that interacts with MSH2.</title>
        <authorList>
            <person name="Tishkoff D.X."/>
            <person name="Boerger A.L."/>
            <person name="Bertrand P."/>
            <person name="Filosi N."/>
            <person name="Gaida G.M."/>
            <person name="Kane M.F."/>
            <person name="Kolodner R.D."/>
        </authorList>
    </citation>
    <scope>NUCLEOTIDE SEQUENCE [GENOMIC DNA]</scope>
    <scope>FUNCTION</scope>
    <scope>INTERACTION WITH MSH2</scope>
</reference>
<reference key="2">
    <citation type="journal article" date="1997" name="Nature">
        <title>The nucleotide sequence of Saccharomyces cerevisiae chromosome XV.</title>
        <authorList>
            <person name="Dujon B."/>
            <person name="Albermann K."/>
            <person name="Aldea M."/>
            <person name="Alexandraki D."/>
            <person name="Ansorge W."/>
            <person name="Arino J."/>
            <person name="Benes V."/>
            <person name="Bohn C."/>
            <person name="Bolotin-Fukuhara M."/>
            <person name="Bordonne R."/>
            <person name="Boyer J."/>
            <person name="Camasses A."/>
            <person name="Casamayor A."/>
            <person name="Casas C."/>
            <person name="Cheret G."/>
            <person name="Cziepluch C."/>
            <person name="Daignan-Fornier B."/>
            <person name="Dang V.-D."/>
            <person name="de Haan M."/>
            <person name="Delius H."/>
            <person name="Durand P."/>
            <person name="Fairhead C."/>
            <person name="Feldmann H."/>
            <person name="Gaillon L."/>
            <person name="Galisson F."/>
            <person name="Gamo F.-J."/>
            <person name="Gancedo C."/>
            <person name="Goffeau A."/>
            <person name="Goulding S.E."/>
            <person name="Grivell L.A."/>
            <person name="Habbig B."/>
            <person name="Hand N.J."/>
            <person name="Hani J."/>
            <person name="Hattenhorst U."/>
            <person name="Hebling U."/>
            <person name="Hernando Y."/>
            <person name="Herrero E."/>
            <person name="Heumann K."/>
            <person name="Hiesel R."/>
            <person name="Hilger F."/>
            <person name="Hofmann B."/>
            <person name="Hollenberg C.P."/>
            <person name="Hughes B."/>
            <person name="Jauniaux J.-C."/>
            <person name="Kalogeropoulos A."/>
            <person name="Katsoulou C."/>
            <person name="Kordes E."/>
            <person name="Lafuente M.J."/>
            <person name="Landt O."/>
            <person name="Louis E.J."/>
            <person name="Maarse A.C."/>
            <person name="Madania A."/>
            <person name="Mannhaupt G."/>
            <person name="Marck C."/>
            <person name="Martin R.P."/>
            <person name="Mewes H.-W."/>
            <person name="Michaux G."/>
            <person name="Paces V."/>
            <person name="Parle-McDermott A.G."/>
            <person name="Pearson B.M."/>
            <person name="Perrin A."/>
            <person name="Pettersson B."/>
            <person name="Poch O."/>
            <person name="Pohl T.M."/>
            <person name="Poirey R."/>
            <person name="Portetelle D."/>
            <person name="Pujol A."/>
            <person name="Purnelle B."/>
            <person name="Ramezani Rad M."/>
            <person name="Rechmann S."/>
            <person name="Schwager C."/>
            <person name="Schweizer M."/>
            <person name="Sor F."/>
            <person name="Sterky F."/>
            <person name="Tarassov I.A."/>
            <person name="Teodoru C."/>
            <person name="Tettelin H."/>
            <person name="Thierry A."/>
            <person name="Tobiasch E."/>
            <person name="Tzermia M."/>
            <person name="Uhlen M."/>
            <person name="Unseld M."/>
            <person name="Valens M."/>
            <person name="Vandenbol M."/>
            <person name="Vetter I."/>
            <person name="Vlcek C."/>
            <person name="Voet M."/>
            <person name="Volckaert G."/>
            <person name="Voss H."/>
            <person name="Wambutt R."/>
            <person name="Wedler H."/>
            <person name="Wiemann S."/>
            <person name="Winsor B."/>
            <person name="Wolfe K.H."/>
            <person name="Zollner A."/>
            <person name="Zumstein E."/>
            <person name="Kleine K."/>
        </authorList>
    </citation>
    <scope>NUCLEOTIDE SEQUENCE [LARGE SCALE GENOMIC DNA]</scope>
    <source>
        <strain>ATCC 204508 / S288c</strain>
    </source>
</reference>
<reference key="3">
    <citation type="journal article" date="2014" name="G3 (Bethesda)">
        <title>The reference genome sequence of Saccharomyces cerevisiae: Then and now.</title>
        <authorList>
            <person name="Engel S.R."/>
            <person name="Dietrich F.S."/>
            <person name="Fisk D.G."/>
            <person name="Binkley G."/>
            <person name="Balakrishnan R."/>
            <person name="Costanzo M.C."/>
            <person name="Dwight S.S."/>
            <person name="Hitz B.C."/>
            <person name="Karra K."/>
            <person name="Nash R.S."/>
            <person name="Weng S."/>
            <person name="Wong E.D."/>
            <person name="Lloyd P."/>
            <person name="Skrzypek M.S."/>
            <person name="Miyasato S.R."/>
            <person name="Simison M."/>
            <person name="Cherry J.M."/>
        </authorList>
    </citation>
    <scope>GENOME REANNOTATION</scope>
    <source>
        <strain>ATCC 204508 / S288c</strain>
    </source>
</reference>
<reference key="4">
    <citation type="journal article" date="1994" name="Biosci. Biotechnol. Biochem.">
        <title>Molecular cloning of a gene, DHS1, which complements a drug-hypersensitive mutation of the yeast Saccharomyces cerevisiae.</title>
        <authorList>
            <person name="Lee Y.S."/>
            <person name="Shimizu J."/>
            <person name="Yoda K."/>
            <person name="Yamasaki M."/>
        </authorList>
    </citation>
    <scope>NUCLEOTIDE SEQUENCE [GENOMIC DNA] OF 220-702</scope>
</reference>
<reference key="5">
    <citation type="journal article" date="1997" name="Mol. Cell. Biol.">
        <title>Exonuclease I of Saccharomyces cerevisiae functions in mitotic recombination in vivo and in vitro.</title>
        <authorList>
            <person name="Fiorentini P."/>
            <person name="Huang K.N."/>
            <person name="Tishkoff D.X."/>
            <person name="Kolodner R.D."/>
            <person name="Symington L.S."/>
        </authorList>
    </citation>
    <scope>FUNCTION</scope>
</reference>
<reference key="6">
    <citation type="journal article" date="2000" name="Genetics">
        <title>Decreased meiotic intergenic recombination and increased meiosis I nondisjunction in exo1 mutants of Saccharomyces cerevisiae.</title>
        <authorList>
            <person name="Kirkpatrick D.T."/>
            <person name="Ferguson J.R."/>
            <person name="Petes T.D."/>
            <person name="Symington L.S."/>
        </authorList>
    </citation>
    <scope>FUNCTION</scope>
</reference>
<reference key="7">
    <citation type="journal article" date="2003" name="Nature">
        <title>Global analysis of protein expression in yeast.</title>
        <authorList>
            <person name="Ghaemmaghami S."/>
            <person name="Huh W.-K."/>
            <person name="Bower K."/>
            <person name="Howson R.W."/>
            <person name="Belle A."/>
            <person name="Dephoure N."/>
            <person name="O'Shea E.K."/>
            <person name="Weissman J.S."/>
        </authorList>
    </citation>
    <scope>LEVEL OF PROTEIN EXPRESSION [LARGE SCALE ANALYSIS]</scope>
</reference>
<reference key="8">
    <citation type="journal article" date="2005" name="Mol. Cell">
        <title>Exo1 processes stalled replication forks and counteracts fork reversal in checkpoint-defective cells.</title>
        <authorList>
            <person name="Cotta-Ramusino C."/>
            <person name="Fachinetti D."/>
            <person name="Lucca C."/>
            <person name="Doksani Y."/>
            <person name="Lopes M."/>
            <person name="Sogo J."/>
            <person name="Foiani M."/>
        </authorList>
    </citation>
    <scope>FUNCTION</scope>
</reference>
<reference key="9">
    <citation type="journal article" date="2008" name="Mol. Cell. Proteomics">
        <title>A multidimensional chromatography technology for in-depth phosphoproteome analysis.</title>
        <authorList>
            <person name="Albuquerque C.P."/>
            <person name="Smolka M.B."/>
            <person name="Payne S.H."/>
            <person name="Bafna V."/>
            <person name="Eng J."/>
            <person name="Zhou H."/>
        </authorList>
    </citation>
    <scope>PHOSPHORYLATION [LARGE SCALE ANALYSIS] AT SER-372</scope>
    <scope>IDENTIFICATION BY MASS SPECTROMETRY [LARGE SCALE ANALYSIS]</scope>
</reference>
<sequence length="702" mass="80162">MGIQGLLPQLKPIQNPVSLRRYEGEVLAIDGYAWLHRAACSCAYELAMGKPTDKYLQFFIKRFSLLKTFKVEPYLVFDGDAIPVKKSTESKRRDKRKENKAIAERLWACGEKKNAMDYFQKCVDITPEMAKCIICYCKLNGIRYIVAPFEADSQMVYLEQKNIVQGIISEDSDLLVFGCRRLITKLNDYGECLEICRDNFIKLPKKFPLGSLTNEEIITMVCLSGCDYTNGIPKVGLITAMKLVRRFNTIERIILSIQREGKLMIPDTYINEYEAAVLAFQFQRVFCPIRKKIVSLNEIPLYLKDTESKRKRLYACIGFVIHRETQKKQIVHFDDDIDHHLHLKIAQGDLNPYDFHQPLANREHKLQLASKSNIEFGKTNTTNSEAKVKPIESFFQKMTKLDHNPKVANNIHSLRQAEDKLTMAIKRRKLSNANVVQETLKDTRSKFFNKPSMTVVENFKEKGDSIQDFKEDTNSQSLEEPVSESQLSTQIPSSFITTNLEDDDNLSEEVSEVVSDIEEDRKNSEGKTIGNEIYNTDDDGDGDTSEDYSETAESRVPTSSTTSFPGSSQRSISGCTKVLQKFRYSSSFSGVNANRQPLFPRHVNQKSRGMVYVNQNRDDDCDDNDGKNQITQRPSLRKSLIGARSQRIVIDMKSVDERKSFNSSPILHEESKKRDIETTKSSQARPAVRSISLLSQFVYKGK</sequence>
<protein>
    <recommendedName>
        <fullName>Exodeoxyribonuclease 1</fullName>
        <ecNumber>3.1.-.-</ecNumber>
    </recommendedName>
    <alternativeName>
        <fullName>Exodeoxyribonuclease I</fullName>
        <shortName>EXO I</shortName>
        <shortName>Exonuclease I</shortName>
    </alternativeName>
    <alternativeName>
        <fullName>Protein DHS1</fullName>
    </alternativeName>
</protein>
<gene>
    <name type="primary">EXO1</name>
    <name type="synonym">DHS1</name>
    <name type="ordered locus">YOR033C</name>
    <name type="ORF">OR26.23</name>
</gene>
<comment type="function">
    <text evidence="3 5 6 7">5'-&gt;3' double-stranded DNA exonuclease involved in mismatch repair and eventually also in mitotic recombination between direct repeats. Also has a minor role in the correction of large DNA mismatches that occur in the heteroduplex DNA during meiotic recombination at the HIS4 locus.</text>
</comment>
<comment type="cofactor">
    <cofactor evidence="1">
        <name>Mg(2+)</name>
        <dbReference type="ChEBI" id="CHEBI:18420"/>
    </cofactor>
    <text evidence="1">Binds 2 magnesium ions per subunit. They probably participate in the reaction catalyzed by the enzyme. May bind an additional third magnesium ion after substrate binding.</text>
</comment>
<comment type="activity regulation">
    <text>Inactivated by calcium and zinc ions.</text>
</comment>
<comment type="subunit">
    <text evidence="7">Interacts with mismatch repair protein MSH2.</text>
</comment>
<comment type="interaction">
    <interactant intactId="EBI-6738">
        <id>P39875</id>
    </interactant>
    <interactant intactId="EBI-11003">
        <id>P38920</id>
        <label>MLH1</label>
    </interactant>
    <organismsDiffer>false</organismsDiffer>
    <experiments>3</experiments>
</comment>
<comment type="interaction">
    <interactant intactId="EBI-6738">
        <id>P39875</id>
    </interactant>
    <interactant intactId="EBI-11352">
        <id>P25847</id>
        <label>MSH2</label>
    </interactant>
    <organismsDiffer>false</organismsDiffer>
    <experiments>3</experiments>
</comment>
<comment type="interaction">
    <interactant intactId="EBI-6738">
        <id>P39875</id>
    </interactant>
    <interactant intactId="EBI-355888">
        <id>P43246</id>
        <label>MSH2</label>
    </interactant>
    <organismsDiffer>true</organismsDiffer>
    <experiments>2</experiments>
</comment>
<comment type="subcellular location">
    <subcellularLocation>
        <location evidence="8">Nucleus</location>
    </subcellularLocation>
</comment>
<comment type="miscellaneous">
    <text evidence="4">Present with 672 molecules/cell in log phase SD medium.</text>
</comment>
<comment type="similarity">
    <text evidence="8">Belongs to the XPG/RAD2 endonuclease family. EXO1 subfamily.</text>
</comment>
<name>EXO1_YEAST</name>
<accession>P39875</accession>
<accession>D6W299</accession>
<dbReference type="EC" id="3.1.-.-"/>
<dbReference type="EMBL" id="U86134">
    <property type="protein sequence ID" value="AAB47428.1"/>
    <property type="molecule type" value="Genomic_DNA"/>
</dbReference>
<dbReference type="EMBL" id="X87331">
    <property type="protein sequence ID" value="CAA60749.1"/>
    <property type="molecule type" value="Genomic_DNA"/>
</dbReference>
<dbReference type="EMBL" id="Z74941">
    <property type="protein sequence ID" value="CAA99223.1"/>
    <property type="molecule type" value="Genomic_DNA"/>
</dbReference>
<dbReference type="EMBL" id="S69545">
    <property type="protein sequence ID" value="AAC60570.1"/>
    <property type="molecule type" value="Genomic_DNA"/>
</dbReference>
<dbReference type="EMBL" id="BK006948">
    <property type="protein sequence ID" value="DAA10815.1"/>
    <property type="molecule type" value="Genomic_DNA"/>
</dbReference>
<dbReference type="PIR" id="S62169">
    <property type="entry name" value="S62169"/>
</dbReference>
<dbReference type="RefSeq" id="NP_014676.1">
    <property type="nucleotide sequence ID" value="NM_001183452.1"/>
</dbReference>
<dbReference type="PDB" id="4FMO">
    <property type="method" value="X-ray"/>
    <property type="resolution" value="3.04 A"/>
    <property type="chains" value="C=443-450"/>
</dbReference>
<dbReference type="PDBsum" id="4FMO"/>
<dbReference type="SMR" id="P39875"/>
<dbReference type="BioGRID" id="34435">
    <property type="interactions" value="256"/>
</dbReference>
<dbReference type="DIP" id="DIP-2421N"/>
<dbReference type="FunCoup" id="P39875">
    <property type="interactions" value="265"/>
</dbReference>
<dbReference type="IntAct" id="P39875">
    <property type="interactions" value="6"/>
</dbReference>
<dbReference type="STRING" id="4932.YOR033C"/>
<dbReference type="iPTMnet" id="P39875"/>
<dbReference type="PaxDb" id="4932-YOR033C"/>
<dbReference type="PeptideAtlas" id="P39875"/>
<dbReference type="EnsemblFungi" id="YOR033C_mRNA">
    <property type="protein sequence ID" value="YOR033C"/>
    <property type="gene ID" value="YOR033C"/>
</dbReference>
<dbReference type="GeneID" id="854198"/>
<dbReference type="KEGG" id="sce:YOR033C"/>
<dbReference type="AGR" id="SGD:S000005559"/>
<dbReference type="SGD" id="S000005559">
    <property type="gene designation" value="EXO1"/>
</dbReference>
<dbReference type="VEuPathDB" id="FungiDB:YOR033C"/>
<dbReference type="eggNOG" id="KOG2518">
    <property type="taxonomic scope" value="Eukaryota"/>
</dbReference>
<dbReference type="GeneTree" id="ENSGT00510000047676"/>
<dbReference type="HOGENOM" id="CLU_008978_5_0_1"/>
<dbReference type="InParanoid" id="P39875"/>
<dbReference type="OMA" id="WLHRAAC"/>
<dbReference type="OrthoDB" id="26491at2759"/>
<dbReference type="BioCyc" id="YEAST:G3O-33579-MONOMER"/>
<dbReference type="BRENDA" id="3.1.11.1">
    <property type="organism ID" value="984"/>
</dbReference>
<dbReference type="Reactome" id="R-SCE-5358565">
    <property type="pathway name" value="Mismatch repair (MMR) directed by MSH2:MSH6 (MutSalpha)"/>
</dbReference>
<dbReference type="BioGRID-ORCS" id="854198">
    <property type="hits" value="0 hits in 10 CRISPR screens"/>
</dbReference>
<dbReference type="EvolutionaryTrace" id="P39875"/>
<dbReference type="PRO" id="PR:P39875"/>
<dbReference type="Proteomes" id="UP000002311">
    <property type="component" value="Chromosome XV"/>
</dbReference>
<dbReference type="RNAct" id="P39875">
    <property type="molecule type" value="protein"/>
</dbReference>
<dbReference type="GO" id="GO:0005737">
    <property type="term" value="C:cytoplasm"/>
    <property type="evidence" value="ECO:0007005"/>
    <property type="project" value="SGD"/>
</dbReference>
<dbReference type="GO" id="GO:0005634">
    <property type="term" value="C:nucleus"/>
    <property type="evidence" value="ECO:0007005"/>
    <property type="project" value="SGD"/>
</dbReference>
<dbReference type="GO" id="GO:0035312">
    <property type="term" value="F:5'-3' DNA exonuclease activity"/>
    <property type="evidence" value="ECO:0007669"/>
    <property type="project" value="InterPro"/>
</dbReference>
<dbReference type="GO" id="GO:0008409">
    <property type="term" value="F:5'-3' exonuclease activity"/>
    <property type="evidence" value="ECO:0000314"/>
    <property type="project" value="SGD"/>
</dbReference>
<dbReference type="GO" id="GO:0017108">
    <property type="term" value="F:5'-flap endonuclease activity"/>
    <property type="evidence" value="ECO:0000314"/>
    <property type="project" value="SGD"/>
</dbReference>
<dbReference type="GO" id="GO:0003677">
    <property type="term" value="F:DNA binding"/>
    <property type="evidence" value="ECO:0007669"/>
    <property type="project" value="UniProtKB-KW"/>
</dbReference>
<dbReference type="GO" id="GO:0046872">
    <property type="term" value="F:metal ion binding"/>
    <property type="evidence" value="ECO:0007669"/>
    <property type="project" value="UniProtKB-KW"/>
</dbReference>
<dbReference type="GO" id="GO:0000729">
    <property type="term" value="P:DNA double-strand break processing"/>
    <property type="evidence" value="ECO:0000315"/>
    <property type="project" value="SGD"/>
</dbReference>
<dbReference type="GO" id="GO:0007534">
    <property type="term" value="P:gene conversion at mating-type locus"/>
    <property type="evidence" value="ECO:0000315"/>
    <property type="project" value="SGD"/>
</dbReference>
<dbReference type="GO" id="GO:0000706">
    <property type="term" value="P:meiotic DNA double-strand break processing"/>
    <property type="evidence" value="ECO:0000316"/>
    <property type="project" value="SGD"/>
</dbReference>
<dbReference type="GO" id="GO:0006298">
    <property type="term" value="P:mismatch repair"/>
    <property type="evidence" value="ECO:0000315"/>
    <property type="project" value="SGD"/>
</dbReference>
<dbReference type="GO" id="GO:0044818">
    <property type="term" value="P:mitotic G2/M transition checkpoint"/>
    <property type="evidence" value="ECO:0000316"/>
    <property type="project" value="SGD"/>
</dbReference>
<dbReference type="GO" id="GO:0000723">
    <property type="term" value="P:telomere maintenance"/>
    <property type="evidence" value="ECO:0000316"/>
    <property type="project" value="SGD"/>
</dbReference>
<dbReference type="GO" id="GO:0031860">
    <property type="term" value="P:telomeric 3' overhang formation"/>
    <property type="evidence" value="ECO:0000316"/>
    <property type="project" value="SGD"/>
</dbReference>
<dbReference type="CDD" id="cd09908">
    <property type="entry name" value="H3TH_EXO1"/>
    <property type="match status" value="1"/>
</dbReference>
<dbReference type="CDD" id="cd09857">
    <property type="entry name" value="PIN_EXO1"/>
    <property type="match status" value="1"/>
</dbReference>
<dbReference type="FunFam" id="1.10.150.20:FF:000011">
    <property type="entry name" value="exonuclease 1"/>
    <property type="match status" value="1"/>
</dbReference>
<dbReference type="FunFam" id="3.40.50.1010:FF:000002">
    <property type="entry name" value="Exonuclease 1, putative"/>
    <property type="match status" value="1"/>
</dbReference>
<dbReference type="Gene3D" id="1.10.150.20">
    <property type="entry name" value="5' to 3' exonuclease, C-terminal subdomain"/>
    <property type="match status" value="1"/>
</dbReference>
<dbReference type="Gene3D" id="3.40.50.1010">
    <property type="entry name" value="5'-nuclease"/>
    <property type="match status" value="1"/>
</dbReference>
<dbReference type="InterPro" id="IPR036279">
    <property type="entry name" value="5-3_exonuclease_C_sf"/>
</dbReference>
<dbReference type="InterPro" id="IPR037315">
    <property type="entry name" value="EXO1_H3TH"/>
</dbReference>
<dbReference type="InterPro" id="IPR008918">
    <property type="entry name" value="HhH2"/>
</dbReference>
<dbReference type="InterPro" id="IPR029060">
    <property type="entry name" value="PIN-like_dom_sf"/>
</dbReference>
<dbReference type="InterPro" id="IPR044752">
    <property type="entry name" value="PIN-like_EXO1"/>
</dbReference>
<dbReference type="InterPro" id="IPR006086">
    <property type="entry name" value="XPG-I_dom"/>
</dbReference>
<dbReference type="InterPro" id="IPR006084">
    <property type="entry name" value="XPG/Rad2"/>
</dbReference>
<dbReference type="InterPro" id="IPR019974">
    <property type="entry name" value="XPG_CS"/>
</dbReference>
<dbReference type="InterPro" id="IPR006085">
    <property type="entry name" value="XPG_DNA_repair_N"/>
</dbReference>
<dbReference type="PANTHER" id="PTHR11081:SF65">
    <property type="entry name" value="DNA DAMAGE-INDUCIBLE PROTEIN DIN7-RELATED"/>
    <property type="match status" value="1"/>
</dbReference>
<dbReference type="PANTHER" id="PTHR11081">
    <property type="entry name" value="FLAP ENDONUCLEASE FAMILY MEMBER"/>
    <property type="match status" value="1"/>
</dbReference>
<dbReference type="Pfam" id="PF00867">
    <property type="entry name" value="XPG_I"/>
    <property type="match status" value="1"/>
</dbReference>
<dbReference type="Pfam" id="PF00752">
    <property type="entry name" value="XPG_N"/>
    <property type="match status" value="1"/>
</dbReference>
<dbReference type="PRINTS" id="PR00853">
    <property type="entry name" value="XPGRADSUPER"/>
</dbReference>
<dbReference type="SMART" id="SM00279">
    <property type="entry name" value="HhH2"/>
    <property type="match status" value="1"/>
</dbReference>
<dbReference type="SMART" id="SM00484">
    <property type="entry name" value="XPGI"/>
    <property type="match status" value="1"/>
</dbReference>
<dbReference type="SMART" id="SM00485">
    <property type="entry name" value="XPGN"/>
    <property type="match status" value="1"/>
</dbReference>
<dbReference type="SUPFAM" id="SSF47807">
    <property type="entry name" value="5' to 3' exonuclease, C-terminal subdomain"/>
    <property type="match status" value="1"/>
</dbReference>
<dbReference type="SUPFAM" id="SSF88723">
    <property type="entry name" value="PIN domain-like"/>
    <property type="match status" value="1"/>
</dbReference>
<dbReference type="PROSITE" id="PS00841">
    <property type="entry name" value="XPG_1"/>
    <property type="match status" value="1"/>
</dbReference>
<dbReference type="PROSITE" id="PS00842">
    <property type="entry name" value="XPG_2"/>
    <property type="match status" value="1"/>
</dbReference>
<keyword id="KW-0002">3D-structure</keyword>
<keyword id="KW-0227">DNA damage</keyword>
<keyword id="KW-0228">DNA excision</keyword>
<keyword id="KW-0234">DNA repair</keyword>
<keyword id="KW-0238">DNA-binding</keyword>
<keyword id="KW-0267">Excision nuclease</keyword>
<keyword id="KW-0269">Exonuclease</keyword>
<keyword id="KW-0378">Hydrolase</keyword>
<keyword id="KW-0460">Magnesium</keyword>
<keyword id="KW-0479">Metal-binding</keyword>
<keyword id="KW-0540">Nuclease</keyword>
<keyword id="KW-0539">Nucleus</keyword>
<keyword id="KW-0597">Phosphoprotein</keyword>
<keyword id="KW-1185">Reference proteome</keyword>